<name>DNSL1_MOUSE</name>
<feature type="signal peptide" evidence="2">
    <location>
        <begin position="1"/>
        <end position="37"/>
    </location>
</feature>
<feature type="chain" id="PRO_0000007285" description="Deoxyribonuclease-1-like 1">
    <location>
        <begin position="38"/>
        <end position="314"/>
    </location>
</feature>
<feature type="active site" evidence="1">
    <location>
        <position position="113"/>
    </location>
</feature>
<feature type="active site" evidence="1">
    <location>
        <position position="164"/>
    </location>
</feature>
<feature type="glycosylation site" description="N-linked (GlcNAc...) asparagine" evidence="2">
    <location>
        <position position="102"/>
    </location>
</feature>
<feature type="glycosylation site" description="N-linked (GlcNAc...) asparagine" evidence="2">
    <location>
        <position position="133"/>
    </location>
</feature>
<feature type="glycosylation site" description="N-linked (GlcNAc...) asparagine" evidence="2">
    <location>
        <position position="239"/>
    </location>
</feature>
<feature type="disulfide bond" description="Essential for enzymatic activity" evidence="1">
    <location>
        <begin position="203"/>
        <end position="240"/>
    </location>
</feature>
<sequence>MPFGQPGFLWRVPDAHIAMRGLVMAPLLILLVGGTEAFRICAFNAHRLTLAKLTKESVMDTLVQILARCDIMVLQEVVDSSQNTVPFLLQKLKSSRSYSFLNSSLLGRSTYKEKYVYIYRSDKTQVLNFYQYNDTDDIFAREPFVAHFTLPSKTLPSVVLVPLHTTPKDVEKELNALYDVFLDVYQRWQNENVILLGDFNADCASLTKKRLKSLLLRTKAGFHWVIPDGEDTTVRASTNCTYDRIVVHGQGCQMLLKAAATFDFPKRFQLTEEEALRISDHYPVEVELSQATPLSIPPHYLAALLLSLLPSQLD</sequence>
<proteinExistence type="evidence at transcript level"/>
<gene>
    <name type="primary">Dnase1l1</name>
</gene>
<dbReference type="EC" id="3.1.21.-"/>
<dbReference type="EMBL" id="DQ116784">
    <property type="protein sequence ID" value="AAZ94277.1"/>
    <property type="molecule type" value="mRNA"/>
</dbReference>
<dbReference type="EMBL" id="AK009174">
    <property type="protein sequence ID" value="BAB26122.1"/>
    <property type="molecule type" value="mRNA"/>
</dbReference>
<dbReference type="EMBL" id="AK150242">
    <property type="protein sequence ID" value="BAE29406.1"/>
    <property type="molecule type" value="mRNA"/>
</dbReference>
<dbReference type="EMBL" id="BC023246">
    <property type="protein sequence ID" value="AAH23246.1"/>
    <property type="molecule type" value="mRNA"/>
</dbReference>
<dbReference type="RefSeq" id="NP_001165625.1">
    <property type="nucleotide sequence ID" value="NM_001172154.1"/>
</dbReference>
<dbReference type="RefSeq" id="NP_081385.1">
    <property type="nucleotide sequence ID" value="NM_027109.2"/>
</dbReference>
<dbReference type="SMR" id="Q9D7J6"/>
<dbReference type="BioGRID" id="213511">
    <property type="interactions" value="1"/>
</dbReference>
<dbReference type="FunCoup" id="Q9D7J6">
    <property type="interactions" value="355"/>
</dbReference>
<dbReference type="STRING" id="10090.ENSMUSP00000019232"/>
<dbReference type="GlyCosmos" id="Q9D7J6">
    <property type="glycosylation" value="3 sites, No reported glycans"/>
</dbReference>
<dbReference type="GlyGen" id="Q9D7J6">
    <property type="glycosylation" value="3 sites, 1 N-linked glycan (1 site)"/>
</dbReference>
<dbReference type="PhosphoSitePlus" id="Q9D7J6"/>
<dbReference type="jPOST" id="Q9D7J6"/>
<dbReference type="PaxDb" id="10090-ENSMUSP00000019232"/>
<dbReference type="ProteomicsDB" id="279749"/>
<dbReference type="Pumba" id="Q9D7J6"/>
<dbReference type="Antibodypedia" id="31202">
    <property type="antibodies" value="171 antibodies from 24 providers"/>
</dbReference>
<dbReference type="DNASU" id="69537"/>
<dbReference type="Ensembl" id="ENSMUST00000019232.10">
    <property type="protein sequence ID" value="ENSMUSP00000019232.4"/>
    <property type="gene ID" value="ENSMUSG00000019088.15"/>
</dbReference>
<dbReference type="Ensembl" id="ENSMUST00000239445.2">
    <property type="protein sequence ID" value="ENSMUSP00000159293.2"/>
    <property type="gene ID" value="ENSMUSG00000019088.15"/>
</dbReference>
<dbReference type="GeneID" id="69537"/>
<dbReference type="KEGG" id="mmu:69537"/>
<dbReference type="UCSC" id="uc009tof.2">
    <property type="organism name" value="mouse"/>
</dbReference>
<dbReference type="AGR" id="MGI:109628"/>
<dbReference type="CTD" id="1774"/>
<dbReference type="MGI" id="MGI:109628">
    <property type="gene designation" value="Dnase1l1"/>
</dbReference>
<dbReference type="VEuPathDB" id="HostDB:ENSMUSG00000019088"/>
<dbReference type="eggNOG" id="ENOG502QQFT">
    <property type="taxonomic scope" value="Eukaryota"/>
</dbReference>
<dbReference type="GeneTree" id="ENSGT00950000182846"/>
<dbReference type="HOGENOM" id="CLU_043335_1_0_1"/>
<dbReference type="InParanoid" id="Q9D7J6"/>
<dbReference type="OMA" id="LNFYQYE"/>
<dbReference type="OrthoDB" id="10061407at2759"/>
<dbReference type="PhylomeDB" id="Q9D7J6"/>
<dbReference type="TreeFam" id="TF329541"/>
<dbReference type="Reactome" id="R-MMU-6798695">
    <property type="pathway name" value="Neutrophil degranulation"/>
</dbReference>
<dbReference type="BioGRID-ORCS" id="69537">
    <property type="hits" value="3 hits in 76 CRISPR screens"/>
</dbReference>
<dbReference type="ChiTaRS" id="Dnase1l1">
    <property type="organism name" value="mouse"/>
</dbReference>
<dbReference type="PRO" id="PR:Q9D7J6"/>
<dbReference type="Proteomes" id="UP000000589">
    <property type="component" value="Chromosome X"/>
</dbReference>
<dbReference type="RNAct" id="Q9D7J6">
    <property type="molecule type" value="protein"/>
</dbReference>
<dbReference type="Bgee" id="ENSMUSG00000019088">
    <property type="expression patterns" value="Expressed in quadriceps femoris and 62 other cell types or tissues"/>
</dbReference>
<dbReference type="ExpressionAtlas" id="Q9D7J6">
    <property type="expression patterns" value="baseline and differential"/>
</dbReference>
<dbReference type="GO" id="GO:0005783">
    <property type="term" value="C:endoplasmic reticulum"/>
    <property type="evidence" value="ECO:0007669"/>
    <property type="project" value="UniProtKB-SubCell"/>
</dbReference>
<dbReference type="GO" id="GO:0004536">
    <property type="term" value="F:DNA nuclease activity"/>
    <property type="evidence" value="ECO:0007669"/>
    <property type="project" value="InterPro"/>
</dbReference>
<dbReference type="GO" id="GO:0004519">
    <property type="term" value="F:endonuclease activity"/>
    <property type="evidence" value="ECO:0007669"/>
    <property type="project" value="UniProtKB-KW"/>
</dbReference>
<dbReference type="GO" id="GO:0006308">
    <property type="term" value="P:DNA catabolic process"/>
    <property type="evidence" value="ECO:0007669"/>
    <property type="project" value="InterPro"/>
</dbReference>
<dbReference type="CDD" id="cd10282">
    <property type="entry name" value="DNase1"/>
    <property type="match status" value="1"/>
</dbReference>
<dbReference type="FunFam" id="3.60.10.10:FF:000007">
    <property type="entry name" value="Deoxyribonuclease"/>
    <property type="match status" value="1"/>
</dbReference>
<dbReference type="Gene3D" id="3.60.10.10">
    <property type="entry name" value="Endonuclease/exonuclease/phosphatase"/>
    <property type="match status" value="1"/>
</dbReference>
<dbReference type="InterPro" id="IPR018057">
    <property type="entry name" value="Deoxyribonuclease-1_AS"/>
</dbReference>
<dbReference type="InterPro" id="IPR016202">
    <property type="entry name" value="DNase_I"/>
</dbReference>
<dbReference type="InterPro" id="IPR033125">
    <property type="entry name" value="DNASE_I_2"/>
</dbReference>
<dbReference type="InterPro" id="IPR036691">
    <property type="entry name" value="Endo/exonu/phosph_ase_sf"/>
</dbReference>
<dbReference type="InterPro" id="IPR005135">
    <property type="entry name" value="Endo/exonuclease/phosphatase"/>
</dbReference>
<dbReference type="PANTHER" id="PTHR11371">
    <property type="entry name" value="DEOXYRIBONUCLEASE"/>
    <property type="match status" value="1"/>
</dbReference>
<dbReference type="PANTHER" id="PTHR11371:SF28">
    <property type="entry name" value="DEOXYRIBONUCLEASE-1-LIKE 1"/>
    <property type="match status" value="1"/>
</dbReference>
<dbReference type="Pfam" id="PF03372">
    <property type="entry name" value="Exo_endo_phos"/>
    <property type="match status" value="1"/>
</dbReference>
<dbReference type="PIRSF" id="PIRSF000988">
    <property type="entry name" value="DNase_I_euk"/>
    <property type="match status" value="1"/>
</dbReference>
<dbReference type="PRINTS" id="PR00130">
    <property type="entry name" value="DNASEI"/>
</dbReference>
<dbReference type="SMART" id="SM00476">
    <property type="entry name" value="DNaseIc"/>
    <property type="match status" value="1"/>
</dbReference>
<dbReference type="SUPFAM" id="SSF56219">
    <property type="entry name" value="DNase I-like"/>
    <property type="match status" value="1"/>
</dbReference>
<dbReference type="PROSITE" id="PS00919">
    <property type="entry name" value="DNASE_I_1"/>
    <property type="match status" value="1"/>
</dbReference>
<dbReference type="PROSITE" id="PS00918">
    <property type="entry name" value="DNASE_I_2"/>
    <property type="match status" value="1"/>
</dbReference>
<organism>
    <name type="scientific">Mus musculus</name>
    <name type="common">Mouse</name>
    <dbReference type="NCBI Taxonomy" id="10090"/>
    <lineage>
        <taxon>Eukaryota</taxon>
        <taxon>Metazoa</taxon>
        <taxon>Chordata</taxon>
        <taxon>Craniata</taxon>
        <taxon>Vertebrata</taxon>
        <taxon>Euteleostomi</taxon>
        <taxon>Mammalia</taxon>
        <taxon>Eutheria</taxon>
        <taxon>Euarchontoglires</taxon>
        <taxon>Glires</taxon>
        <taxon>Rodentia</taxon>
        <taxon>Myomorpha</taxon>
        <taxon>Muroidea</taxon>
        <taxon>Muridae</taxon>
        <taxon>Murinae</taxon>
        <taxon>Mus</taxon>
        <taxon>Mus</taxon>
    </lineage>
</organism>
<protein>
    <recommendedName>
        <fullName>Deoxyribonuclease-1-like 1</fullName>
        <ecNumber>3.1.21.-</ecNumber>
    </recommendedName>
    <alternativeName>
        <fullName>DNase X</fullName>
    </alternativeName>
    <alternativeName>
        <fullName>Deoxyribonuclease I-like 1</fullName>
        <shortName>DNase I-like 1</shortName>
    </alternativeName>
</protein>
<keyword id="KW-1015">Disulfide bond</keyword>
<keyword id="KW-0255">Endonuclease</keyword>
<keyword id="KW-0256">Endoplasmic reticulum</keyword>
<keyword id="KW-0325">Glycoprotein</keyword>
<keyword id="KW-0378">Hydrolase</keyword>
<keyword id="KW-0540">Nuclease</keyword>
<keyword id="KW-1185">Reference proteome</keyword>
<keyword id="KW-0732">Signal</keyword>
<accession>Q9D7J6</accession>
<accession>Q3UD56</accession>
<reference key="1">
    <citation type="journal article" date="2005" name="Biochem. J.">
        <title>Physical and biochemical properties of mammalian DNase X proteins: non-AUG translation initiation of porcine and bovine mRNAs for DNase X.</title>
        <authorList>
            <person name="Shiokawa D."/>
            <person name="Shika Y."/>
            <person name="Saito K."/>
            <person name="Yamazaki K."/>
            <person name="Tanuma S."/>
        </authorList>
    </citation>
    <scope>NUCLEOTIDE SEQUENCE [MRNA]</scope>
    <scope>TISSUE SPECIFICITY</scope>
</reference>
<reference key="2">
    <citation type="journal article" date="2005" name="Science">
        <title>The transcriptional landscape of the mammalian genome.</title>
        <authorList>
            <person name="Carninci P."/>
            <person name="Kasukawa T."/>
            <person name="Katayama S."/>
            <person name="Gough J."/>
            <person name="Frith M.C."/>
            <person name="Maeda N."/>
            <person name="Oyama R."/>
            <person name="Ravasi T."/>
            <person name="Lenhard B."/>
            <person name="Wells C."/>
            <person name="Kodzius R."/>
            <person name="Shimokawa K."/>
            <person name="Bajic V.B."/>
            <person name="Brenner S.E."/>
            <person name="Batalov S."/>
            <person name="Forrest A.R."/>
            <person name="Zavolan M."/>
            <person name="Davis M.J."/>
            <person name="Wilming L.G."/>
            <person name="Aidinis V."/>
            <person name="Allen J.E."/>
            <person name="Ambesi-Impiombato A."/>
            <person name="Apweiler R."/>
            <person name="Aturaliya R.N."/>
            <person name="Bailey T.L."/>
            <person name="Bansal M."/>
            <person name="Baxter L."/>
            <person name="Beisel K.W."/>
            <person name="Bersano T."/>
            <person name="Bono H."/>
            <person name="Chalk A.M."/>
            <person name="Chiu K.P."/>
            <person name="Choudhary V."/>
            <person name="Christoffels A."/>
            <person name="Clutterbuck D.R."/>
            <person name="Crowe M.L."/>
            <person name="Dalla E."/>
            <person name="Dalrymple B.P."/>
            <person name="de Bono B."/>
            <person name="Della Gatta G."/>
            <person name="di Bernardo D."/>
            <person name="Down T."/>
            <person name="Engstrom P."/>
            <person name="Fagiolini M."/>
            <person name="Faulkner G."/>
            <person name="Fletcher C.F."/>
            <person name="Fukushima T."/>
            <person name="Furuno M."/>
            <person name="Futaki S."/>
            <person name="Gariboldi M."/>
            <person name="Georgii-Hemming P."/>
            <person name="Gingeras T.R."/>
            <person name="Gojobori T."/>
            <person name="Green R.E."/>
            <person name="Gustincich S."/>
            <person name="Harbers M."/>
            <person name="Hayashi Y."/>
            <person name="Hensch T.K."/>
            <person name="Hirokawa N."/>
            <person name="Hill D."/>
            <person name="Huminiecki L."/>
            <person name="Iacono M."/>
            <person name="Ikeo K."/>
            <person name="Iwama A."/>
            <person name="Ishikawa T."/>
            <person name="Jakt M."/>
            <person name="Kanapin A."/>
            <person name="Katoh M."/>
            <person name="Kawasawa Y."/>
            <person name="Kelso J."/>
            <person name="Kitamura H."/>
            <person name="Kitano H."/>
            <person name="Kollias G."/>
            <person name="Krishnan S.P."/>
            <person name="Kruger A."/>
            <person name="Kummerfeld S.K."/>
            <person name="Kurochkin I.V."/>
            <person name="Lareau L.F."/>
            <person name="Lazarevic D."/>
            <person name="Lipovich L."/>
            <person name="Liu J."/>
            <person name="Liuni S."/>
            <person name="McWilliam S."/>
            <person name="Madan Babu M."/>
            <person name="Madera M."/>
            <person name="Marchionni L."/>
            <person name="Matsuda H."/>
            <person name="Matsuzawa S."/>
            <person name="Miki H."/>
            <person name="Mignone F."/>
            <person name="Miyake S."/>
            <person name="Morris K."/>
            <person name="Mottagui-Tabar S."/>
            <person name="Mulder N."/>
            <person name="Nakano N."/>
            <person name="Nakauchi H."/>
            <person name="Ng P."/>
            <person name="Nilsson R."/>
            <person name="Nishiguchi S."/>
            <person name="Nishikawa S."/>
            <person name="Nori F."/>
            <person name="Ohara O."/>
            <person name="Okazaki Y."/>
            <person name="Orlando V."/>
            <person name="Pang K.C."/>
            <person name="Pavan W.J."/>
            <person name="Pavesi G."/>
            <person name="Pesole G."/>
            <person name="Petrovsky N."/>
            <person name="Piazza S."/>
            <person name="Reed J."/>
            <person name="Reid J.F."/>
            <person name="Ring B.Z."/>
            <person name="Ringwald M."/>
            <person name="Rost B."/>
            <person name="Ruan Y."/>
            <person name="Salzberg S.L."/>
            <person name="Sandelin A."/>
            <person name="Schneider C."/>
            <person name="Schoenbach C."/>
            <person name="Sekiguchi K."/>
            <person name="Semple C.A."/>
            <person name="Seno S."/>
            <person name="Sessa L."/>
            <person name="Sheng Y."/>
            <person name="Shibata Y."/>
            <person name="Shimada H."/>
            <person name="Shimada K."/>
            <person name="Silva D."/>
            <person name="Sinclair B."/>
            <person name="Sperling S."/>
            <person name="Stupka E."/>
            <person name="Sugiura K."/>
            <person name="Sultana R."/>
            <person name="Takenaka Y."/>
            <person name="Taki K."/>
            <person name="Tammoja K."/>
            <person name="Tan S.L."/>
            <person name="Tang S."/>
            <person name="Taylor M.S."/>
            <person name="Tegner J."/>
            <person name="Teichmann S.A."/>
            <person name="Ueda H.R."/>
            <person name="van Nimwegen E."/>
            <person name="Verardo R."/>
            <person name="Wei C.L."/>
            <person name="Yagi K."/>
            <person name="Yamanishi H."/>
            <person name="Zabarovsky E."/>
            <person name="Zhu S."/>
            <person name="Zimmer A."/>
            <person name="Hide W."/>
            <person name="Bult C."/>
            <person name="Grimmond S.M."/>
            <person name="Teasdale R.D."/>
            <person name="Liu E.T."/>
            <person name="Brusic V."/>
            <person name="Quackenbush J."/>
            <person name="Wahlestedt C."/>
            <person name="Mattick J.S."/>
            <person name="Hume D.A."/>
            <person name="Kai C."/>
            <person name="Sasaki D."/>
            <person name="Tomaru Y."/>
            <person name="Fukuda S."/>
            <person name="Kanamori-Katayama M."/>
            <person name="Suzuki M."/>
            <person name="Aoki J."/>
            <person name="Arakawa T."/>
            <person name="Iida J."/>
            <person name="Imamura K."/>
            <person name="Itoh M."/>
            <person name="Kato T."/>
            <person name="Kawaji H."/>
            <person name="Kawagashira N."/>
            <person name="Kawashima T."/>
            <person name="Kojima M."/>
            <person name="Kondo S."/>
            <person name="Konno H."/>
            <person name="Nakano K."/>
            <person name="Ninomiya N."/>
            <person name="Nishio T."/>
            <person name="Okada M."/>
            <person name="Plessy C."/>
            <person name="Shibata K."/>
            <person name="Shiraki T."/>
            <person name="Suzuki S."/>
            <person name="Tagami M."/>
            <person name="Waki K."/>
            <person name="Watahiki A."/>
            <person name="Okamura-Oho Y."/>
            <person name="Suzuki H."/>
            <person name="Kawai J."/>
            <person name="Hayashizaki Y."/>
        </authorList>
    </citation>
    <scope>NUCLEOTIDE SEQUENCE [LARGE SCALE MRNA]</scope>
    <source>
        <strain>C57BL/6J</strain>
        <tissue>Bone marrow</tissue>
        <tissue>Tongue</tissue>
    </source>
</reference>
<reference key="3">
    <citation type="journal article" date="2004" name="Genome Res.">
        <title>The status, quality, and expansion of the NIH full-length cDNA project: the Mammalian Gene Collection (MGC).</title>
        <authorList>
            <consortium name="The MGC Project Team"/>
        </authorList>
    </citation>
    <scope>NUCLEOTIDE SEQUENCE [LARGE SCALE MRNA]</scope>
    <source>
        <strain>FVB/N</strain>
        <tissue>Mammary tumor</tissue>
    </source>
</reference>
<evidence type="ECO:0000250" key="1"/>
<evidence type="ECO:0000255" key="2"/>
<evidence type="ECO:0000269" key="3">
    <source>
    </source>
</evidence>
<evidence type="ECO:0000305" key="4"/>
<comment type="subcellular location">
    <subcellularLocation>
        <location evidence="1">Endoplasmic reticulum</location>
    </subcellularLocation>
</comment>
<comment type="tissue specificity">
    <text evidence="3">Highly expressed in heart and skeletal muscles. Low expression in brain and thymus. Intermediated expression in other tissues.</text>
</comment>
<comment type="similarity">
    <text evidence="4">Belongs to the DNase I family.</text>
</comment>